<feature type="chain" id="PRO_1000062992" description="tRNA/tmRNA (uracil-C(5))-methyltransferase">
    <location>
        <begin position="1"/>
        <end position="363"/>
    </location>
</feature>
<feature type="active site" description="Nucleophile" evidence="1">
    <location>
        <position position="321"/>
    </location>
</feature>
<feature type="active site" description="Proton acceptor" evidence="1">
    <location>
        <position position="355"/>
    </location>
</feature>
<feature type="binding site" evidence="1">
    <location>
        <position position="187"/>
    </location>
    <ligand>
        <name>S-adenosyl-L-methionine</name>
        <dbReference type="ChEBI" id="CHEBI:59789"/>
    </ligand>
</feature>
<feature type="binding site" evidence="1">
    <location>
        <position position="215"/>
    </location>
    <ligand>
        <name>S-adenosyl-L-methionine</name>
        <dbReference type="ChEBI" id="CHEBI:59789"/>
    </ligand>
</feature>
<feature type="binding site" evidence="1">
    <location>
        <position position="220"/>
    </location>
    <ligand>
        <name>S-adenosyl-L-methionine</name>
        <dbReference type="ChEBI" id="CHEBI:59789"/>
    </ligand>
</feature>
<feature type="binding site" evidence="1">
    <location>
        <position position="236"/>
    </location>
    <ligand>
        <name>S-adenosyl-L-methionine</name>
        <dbReference type="ChEBI" id="CHEBI:59789"/>
    </ligand>
</feature>
<feature type="binding site" evidence="1">
    <location>
        <position position="296"/>
    </location>
    <ligand>
        <name>S-adenosyl-L-methionine</name>
        <dbReference type="ChEBI" id="CHEBI:59789"/>
    </ligand>
</feature>
<name>TRMA_PSEP7</name>
<keyword id="KW-0489">Methyltransferase</keyword>
<keyword id="KW-0949">S-adenosyl-L-methionine</keyword>
<keyword id="KW-0808">Transferase</keyword>
<keyword id="KW-0819">tRNA processing</keyword>
<protein>
    <recommendedName>
        <fullName evidence="1">tRNA/tmRNA (uracil-C(5))-methyltransferase</fullName>
        <ecNumber evidence="1">2.1.1.-</ecNumber>
        <ecNumber evidence="1">2.1.1.35</ecNumber>
    </recommendedName>
    <alternativeName>
        <fullName evidence="1">tRNA (uracil(54)-C(5))-methyltransferase</fullName>
    </alternativeName>
    <alternativeName>
        <fullName evidence="1">tRNA(m5U54)-methyltransferase</fullName>
        <shortName evidence="1">RUMT</shortName>
    </alternativeName>
    <alternativeName>
        <fullName evidence="1">tmRNA (uracil(341)-C(5))-methyltransferase</fullName>
    </alternativeName>
</protein>
<gene>
    <name evidence="1" type="primary">trmA</name>
    <name type="ordered locus">PSPA7_5436</name>
</gene>
<dbReference type="EC" id="2.1.1.-" evidence="1"/>
<dbReference type="EC" id="2.1.1.35" evidence="1"/>
<dbReference type="EMBL" id="CP000744">
    <property type="protein sequence ID" value="ABR82915.1"/>
    <property type="molecule type" value="Genomic_DNA"/>
</dbReference>
<dbReference type="RefSeq" id="WP_012077474.1">
    <property type="nucleotide sequence ID" value="NC_009656.1"/>
</dbReference>
<dbReference type="SMR" id="A6VCH5"/>
<dbReference type="GeneID" id="77223254"/>
<dbReference type="KEGG" id="pap:PSPA7_5436"/>
<dbReference type="HOGENOM" id="CLU_043022_0_0_6"/>
<dbReference type="Proteomes" id="UP000001582">
    <property type="component" value="Chromosome"/>
</dbReference>
<dbReference type="GO" id="GO:0005829">
    <property type="term" value="C:cytosol"/>
    <property type="evidence" value="ECO:0007669"/>
    <property type="project" value="TreeGrafter"/>
</dbReference>
<dbReference type="GO" id="GO:0019843">
    <property type="term" value="F:rRNA binding"/>
    <property type="evidence" value="ECO:0007669"/>
    <property type="project" value="TreeGrafter"/>
</dbReference>
<dbReference type="GO" id="GO:0030697">
    <property type="term" value="F:tRNA (uracil(54)-C5)-methyltransferase activity, S-adenosyl methionine-dependent"/>
    <property type="evidence" value="ECO:0007669"/>
    <property type="project" value="UniProtKB-UniRule"/>
</dbReference>
<dbReference type="GO" id="GO:0000049">
    <property type="term" value="F:tRNA binding"/>
    <property type="evidence" value="ECO:0007669"/>
    <property type="project" value="TreeGrafter"/>
</dbReference>
<dbReference type="GO" id="GO:0030488">
    <property type="term" value="P:tRNA methylation"/>
    <property type="evidence" value="ECO:0007669"/>
    <property type="project" value="UniProtKB-UniRule"/>
</dbReference>
<dbReference type="CDD" id="cd02440">
    <property type="entry name" value="AdoMet_MTases"/>
    <property type="match status" value="1"/>
</dbReference>
<dbReference type="FunFam" id="2.40.50.1070:FF:000001">
    <property type="entry name" value="tRNA/tmRNA (uracil-C(5))-methyltransferase"/>
    <property type="match status" value="1"/>
</dbReference>
<dbReference type="FunFam" id="3.40.50.150:FF:000012">
    <property type="entry name" value="tRNA/tmRNA (uracil-C(5))-methyltransferase"/>
    <property type="match status" value="1"/>
</dbReference>
<dbReference type="Gene3D" id="2.40.50.1070">
    <property type="match status" value="1"/>
</dbReference>
<dbReference type="Gene3D" id="3.40.50.150">
    <property type="entry name" value="Vaccinia Virus protein VP39"/>
    <property type="match status" value="1"/>
</dbReference>
<dbReference type="HAMAP" id="MF_01011">
    <property type="entry name" value="RNA_methyltr_TrmA"/>
    <property type="match status" value="1"/>
</dbReference>
<dbReference type="InterPro" id="IPR030390">
    <property type="entry name" value="MeTrfase_TrmA_AS"/>
</dbReference>
<dbReference type="InterPro" id="IPR030391">
    <property type="entry name" value="MeTrfase_TrmA_CS"/>
</dbReference>
<dbReference type="InterPro" id="IPR029063">
    <property type="entry name" value="SAM-dependent_MTases_sf"/>
</dbReference>
<dbReference type="InterPro" id="IPR011869">
    <property type="entry name" value="TrmA_MeTrfase"/>
</dbReference>
<dbReference type="InterPro" id="IPR010280">
    <property type="entry name" value="U5_MeTrfase_fam"/>
</dbReference>
<dbReference type="NCBIfam" id="TIGR02143">
    <property type="entry name" value="trmA_only"/>
    <property type="match status" value="1"/>
</dbReference>
<dbReference type="PANTHER" id="PTHR47790">
    <property type="entry name" value="TRNA/TMRNA (URACIL-C(5))-METHYLTRANSFERASE"/>
    <property type="match status" value="1"/>
</dbReference>
<dbReference type="PANTHER" id="PTHR47790:SF2">
    <property type="entry name" value="TRNA_TMRNA (URACIL-C(5))-METHYLTRANSFERASE"/>
    <property type="match status" value="1"/>
</dbReference>
<dbReference type="Pfam" id="PF05958">
    <property type="entry name" value="tRNA_U5-meth_tr"/>
    <property type="match status" value="1"/>
</dbReference>
<dbReference type="SUPFAM" id="SSF53335">
    <property type="entry name" value="S-adenosyl-L-methionine-dependent methyltransferases"/>
    <property type="match status" value="1"/>
</dbReference>
<dbReference type="PROSITE" id="PS51687">
    <property type="entry name" value="SAM_MT_RNA_M5U"/>
    <property type="match status" value="1"/>
</dbReference>
<dbReference type="PROSITE" id="PS01230">
    <property type="entry name" value="TRMA_1"/>
    <property type="match status" value="1"/>
</dbReference>
<dbReference type="PROSITE" id="PS01231">
    <property type="entry name" value="TRMA_2"/>
    <property type="match status" value="1"/>
</dbReference>
<reference key="1">
    <citation type="submission" date="2007-06" db="EMBL/GenBank/DDBJ databases">
        <authorList>
            <person name="Dodson R.J."/>
            <person name="Harkins D."/>
            <person name="Paulsen I.T."/>
        </authorList>
    </citation>
    <scope>NUCLEOTIDE SEQUENCE [LARGE SCALE GENOMIC DNA]</scope>
    <source>
        <strain>DSM 24068 / PA7</strain>
    </source>
</reference>
<evidence type="ECO:0000255" key="1">
    <source>
        <dbReference type="HAMAP-Rule" id="MF_01011"/>
    </source>
</evidence>
<proteinExistence type="inferred from homology"/>
<accession>A6VCH5</accession>
<sequence>MSRPQFDPAAYAAQLEDKKARLAGLLAPFAAPAPEVFESPREHYRLRAEFRLWRETGNENRHYAMFEQGDKHTPILIEDFPIASRRINELMPRLKDAWAEPALGFKLFQVEFLTTLAGDALITLCYHRPIDAAWQQAAEALAAELGVSLVGRSRGKRIVVGRDYVEEELLVAGRRFRYRQPEGAFTQPNGEVNQKMLGWAYEALGEREDDLLELYCGNGNFTLPLATRVRKVLATEISKSSVNAALANLADNAVDNVSLVRLSAEELTQALNEVRPFRRLADIDLKSYAFGSVFVDPPRAGMDPDTCELTRRFERILYISCNPETLAQNIAQLHDTHRISRCALFDQFPYTHHMESGVLLERR</sequence>
<organism>
    <name type="scientific">Pseudomonas paraeruginosa (strain DSM 24068 / PA7)</name>
    <name type="common">Pseudomonas aeruginosa (strain PA7)</name>
    <dbReference type="NCBI Taxonomy" id="381754"/>
    <lineage>
        <taxon>Bacteria</taxon>
        <taxon>Pseudomonadati</taxon>
        <taxon>Pseudomonadota</taxon>
        <taxon>Gammaproteobacteria</taxon>
        <taxon>Pseudomonadales</taxon>
        <taxon>Pseudomonadaceae</taxon>
        <taxon>Pseudomonas</taxon>
        <taxon>Pseudomonas paraeruginosa</taxon>
    </lineage>
</organism>
<comment type="function">
    <text evidence="1">Dual-specificity methyltransferase that catalyzes the formation of 5-methyluridine at position 54 (m5U54) in all tRNAs, and that of position 341 (m5U341) in tmRNA (transfer-mRNA).</text>
</comment>
<comment type="catalytic activity">
    <reaction evidence="1">
        <text>uridine(54) in tRNA + S-adenosyl-L-methionine = 5-methyluridine(54) in tRNA + S-adenosyl-L-homocysteine + H(+)</text>
        <dbReference type="Rhea" id="RHEA:42712"/>
        <dbReference type="Rhea" id="RHEA-COMP:10167"/>
        <dbReference type="Rhea" id="RHEA-COMP:10193"/>
        <dbReference type="ChEBI" id="CHEBI:15378"/>
        <dbReference type="ChEBI" id="CHEBI:57856"/>
        <dbReference type="ChEBI" id="CHEBI:59789"/>
        <dbReference type="ChEBI" id="CHEBI:65315"/>
        <dbReference type="ChEBI" id="CHEBI:74447"/>
        <dbReference type="EC" id="2.1.1.35"/>
    </reaction>
</comment>
<comment type="catalytic activity">
    <reaction evidence="1">
        <text>uridine(341) in tmRNA + S-adenosyl-L-methionine = 5-methyluridine(341) in tmRNA + S-adenosyl-L-homocysteine + H(+)</text>
        <dbReference type="Rhea" id="RHEA:43612"/>
        <dbReference type="Rhea" id="RHEA-COMP:10630"/>
        <dbReference type="Rhea" id="RHEA-COMP:10631"/>
        <dbReference type="ChEBI" id="CHEBI:15378"/>
        <dbReference type="ChEBI" id="CHEBI:57856"/>
        <dbReference type="ChEBI" id="CHEBI:59789"/>
        <dbReference type="ChEBI" id="CHEBI:65315"/>
        <dbReference type="ChEBI" id="CHEBI:74447"/>
    </reaction>
</comment>
<comment type="similarity">
    <text evidence="1">Belongs to the class I-like SAM-binding methyltransferase superfamily. RNA M5U methyltransferase family. TrmA subfamily.</text>
</comment>